<organism>
    <name type="scientific">Aquifex aeolicus (strain VF5)</name>
    <dbReference type="NCBI Taxonomy" id="224324"/>
    <lineage>
        <taxon>Bacteria</taxon>
        <taxon>Pseudomonadati</taxon>
        <taxon>Aquificota</taxon>
        <taxon>Aquificia</taxon>
        <taxon>Aquificales</taxon>
        <taxon>Aquificaceae</taxon>
        <taxon>Aquifex</taxon>
    </lineage>
</organism>
<comment type="similarity">
    <text evidence="1">Belongs to the bacterial ribosomal protein bL35 family.</text>
</comment>
<reference key="1">
    <citation type="journal article" date="1998" name="Nature">
        <title>The complete genome of the hyperthermophilic bacterium Aquifex aeolicus.</title>
        <authorList>
            <person name="Deckert G."/>
            <person name="Warren P.V."/>
            <person name="Gaasterland T."/>
            <person name="Young W.G."/>
            <person name="Lenox A.L."/>
            <person name="Graham D.E."/>
            <person name="Overbeek R."/>
            <person name="Snead M.A."/>
            <person name="Keller M."/>
            <person name="Aujay M."/>
            <person name="Huber R."/>
            <person name="Feldman R.A."/>
            <person name="Short J.M."/>
            <person name="Olsen G.J."/>
            <person name="Swanson R.V."/>
        </authorList>
    </citation>
    <scope>NUCLEOTIDE SEQUENCE [LARGE SCALE GENOMIC DNA]</scope>
    <source>
        <strain>VF5</strain>
    </source>
</reference>
<evidence type="ECO:0000255" key="1">
    <source>
        <dbReference type="HAMAP-Rule" id="MF_00514"/>
    </source>
</evidence>
<evidence type="ECO:0000256" key="2">
    <source>
        <dbReference type="SAM" id="MobiDB-lite"/>
    </source>
</evidence>
<evidence type="ECO:0000305" key="3"/>
<keyword id="KW-1185">Reference proteome</keyword>
<keyword id="KW-0687">Ribonucleoprotein</keyword>
<keyword id="KW-0689">Ribosomal protein</keyword>
<sequence>MAKVKMKTNRSAAKRFKVTAKGKIKRWKSGGAHYNTKKSSKRKRHLRKHTYVKDNMLKHVKALLKEF</sequence>
<dbReference type="EMBL" id="AE000657">
    <property type="protein sequence ID" value="AAC06950.1"/>
    <property type="molecule type" value="Genomic_DNA"/>
</dbReference>
<dbReference type="PIR" id="C70369">
    <property type="entry name" value="C70369"/>
</dbReference>
<dbReference type="RefSeq" id="NP_213543.1">
    <property type="nucleotide sequence ID" value="NC_000918.1"/>
</dbReference>
<dbReference type="RefSeq" id="WP_010880481.1">
    <property type="nucleotide sequence ID" value="NC_000918.1"/>
</dbReference>
<dbReference type="SMR" id="O66982"/>
<dbReference type="FunCoup" id="O66982">
    <property type="interactions" value="321"/>
</dbReference>
<dbReference type="STRING" id="224324.aq_792a"/>
<dbReference type="EnsemblBacteria" id="AAC06950">
    <property type="protein sequence ID" value="AAC06950"/>
    <property type="gene ID" value="aq_792a"/>
</dbReference>
<dbReference type="KEGG" id="aae:aq_792a"/>
<dbReference type="PATRIC" id="fig|224324.8.peg.628"/>
<dbReference type="eggNOG" id="COG0291">
    <property type="taxonomic scope" value="Bacteria"/>
</dbReference>
<dbReference type="HOGENOM" id="CLU_169643_4_3_0"/>
<dbReference type="InParanoid" id="O66982"/>
<dbReference type="OrthoDB" id="47476at2"/>
<dbReference type="Proteomes" id="UP000000798">
    <property type="component" value="Chromosome"/>
</dbReference>
<dbReference type="GO" id="GO:0022625">
    <property type="term" value="C:cytosolic large ribosomal subunit"/>
    <property type="evidence" value="ECO:0000318"/>
    <property type="project" value="GO_Central"/>
</dbReference>
<dbReference type="GO" id="GO:0003735">
    <property type="term" value="F:structural constituent of ribosome"/>
    <property type="evidence" value="ECO:0000318"/>
    <property type="project" value="GO_Central"/>
</dbReference>
<dbReference type="GO" id="GO:0006412">
    <property type="term" value="P:translation"/>
    <property type="evidence" value="ECO:0007669"/>
    <property type="project" value="UniProtKB-UniRule"/>
</dbReference>
<dbReference type="FunFam" id="4.10.410.60:FF:000001">
    <property type="entry name" value="50S ribosomal protein L35"/>
    <property type="match status" value="1"/>
</dbReference>
<dbReference type="Gene3D" id="4.10.410.60">
    <property type="match status" value="1"/>
</dbReference>
<dbReference type="HAMAP" id="MF_00514">
    <property type="entry name" value="Ribosomal_bL35"/>
    <property type="match status" value="1"/>
</dbReference>
<dbReference type="InterPro" id="IPR001706">
    <property type="entry name" value="Ribosomal_bL35"/>
</dbReference>
<dbReference type="InterPro" id="IPR021137">
    <property type="entry name" value="Ribosomal_bL35-like"/>
</dbReference>
<dbReference type="InterPro" id="IPR018265">
    <property type="entry name" value="Ribosomal_bL35_CS"/>
</dbReference>
<dbReference type="InterPro" id="IPR037229">
    <property type="entry name" value="Ribosomal_bL35_sf"/>
</dbReference>
<dbReference type="NCBIfam" id="TIGR00001">
    <property type="entry name" value="rpmI_bact"/>
    <property type="match status" value="1"/>
</dbReference>
<dbReference type="PANTHER" id="PTHR33343">
    <property type="entry name" value="54S RIBOSOMAL PROTEIN BL35M"/>
    <property type="match status" value="1"/>
</dbReference>
<dbReference type="PANTHER" id="PTHR33343:SF1">
    <property type="entry name" value="LARGE RIBOSOMAL SUBUNIT PROTEIN BL35M"/>
    <property type="match status" value="1"/>
</dbReference>
<dbReference type="Pfam" id="PF01632">
    <property type="entry name" value="Ribosomal_L35p"/>
    <property type="match status" value="1"/>
</dbReference>
<dbReference type="PRINTS" id="PR00064">
    <property type="entry name" value="RIBOSOMALL35"/>
</dbReference>
<dbReference type="SUPFAM" id="SSF143034">
    <property type="entry name" value="L35p-like"/>
    <property type="match status" value="1"/>
</dbReference>
<dbReference type="PROSITE" id="PS00936">
    <property type="entry name" value="RIBOSOMAL_L35"/>
    <property type="match status" value="1"/>
</dbReference>
<proteinExistence type="inferred from homology"/>
<protein>
    <recommendedName>
        <fullName evidence="1">Large ribosomal subunit protein bL35</fullName>
    </recommendedName>
    <alternativeName>
        <fullName evidence="3">50S ribosomal protein L35</fullName>
    </alternativeName>
</protein>
<accession>O66982</accession>
<feature type="chain" id="PRO_0000177318" description="Large ribosomal subunit protein bL35">
    <location>
        <begin position="1"/>
        <end position="67"/>
    </location>
</feature>
<feature type="region of interest" description="Disordered" evidence="2">
    <location>
        <begin position="22"/>
        <end position="45"/>
    </location>
</feature>
<feature type="compositionally biased region" description="Basic residues" evidence="2">
    <location>
        <begin position="35"/>
        <end position="45"/>
    </location>
</feature>
<gene>
    <name evidence="1" type="primary">rpmI</name>
    <name type="ordered locus">aq_792.1</name>
    <name type="ORF">aq_792A</name>
</gene>
<name>RL35_AQUAE</name>